<proteinExistence type="evidence at protein level"/>
<organism>
    <name type="scientific">Xenopus laevis</name>
    <name type="common">African clawed frog</name>
    <dbReference type="NCBI Taxonomy" id="8355"/>
    <lineage>
        <taxon>Eukaryota</taxon>
        <taxon>Metazoa</taxon>
        <taxon>Chordata</taxon>
        <taxon>Craniata</taxon>
        <taxon>Vertebrata</taxon>
        <taxon>Euteleostomi</taxon>
        <taxon>Amphibia</taxon>
        <taxon>Batrachia</taxon>
        <taxon>Anura</taxon>
        <taxon>Pipoidea</taxon>
        <taxon>Pipidae</taxon>
        <taxon>Xenopodinae</taxon>
        <taxon>Xenopus</taxon>
        <taxon>Xenopus</taxon>
    </lineage>
</organism>
<keyword id="KW-0025">Alternative splicing</keyword>
<keyword id="KW-0903">Direct protein sequencing</keyword>
<keyword id="KW-1015">Disulfide bond</keyword>
<keyword id="KW-0325">Glycoprotein</keyword>
<keyword id="KW-1185">Reference proteome</keyword>
<keyword id="KW-0677">Repeat</keyword>
<keyword id="KW-0964">Secreted</keyword>
<keyword id="KW-0732">Signal</keyword>
<feature type="signal peptide" evidence="5">
    <location>
        <begin position="1"/>
        <end position="29"/>
    </location>
</feature>
<feature type="chain" id="PRO_0000010110" description="Follistatin">
    <location>
        <begin position="30"/>
        <end position="341"/>
    </location>
</feature>
<feature type="domain" description="TB" evidence="2">
    <location>
        <begin position="30"/>
        <end position="103"/>
    </location>
</feature>
<feature type="domain" description="Follistatin-like 1">
    <location>
        <begin position="94"/>
        <end position="117"/>
    </location>
</feature>
<feature type="domain" description="Kazal-like 1" evidence="3">
    <location>
        <begin position="100"/>
        <end position="166"/>
    </location>
</feature>
<feature type="domain" description="Follistatin-like 2">
    <location>
        <begin position="167"/>
        <end position="190"/>
    </location>
</feature>
<feature type="domain" description="Kazal-like 2" evidence="3">
    <location>
        <begin position="186"/>
        <end position="241"/>
    </location>
</feature>
<feature type="domain" description="Follistatin-like 3">
    <location>
        <begin position="244"/>
        <end position="268"/>
    </location>
</feature>
<feature type="domain" description="Kazal-like 3" evidence="3">
    <location>
        <begin position="264"/>
        <end position="318"/>
    </location>
</feature>
<feature type="region of interest" description="Disordered" evidence="4">
    <location>
        <begin position="321"/>
        <end position="341"/>
    </location>
</feature>
<feature type="compositionally biased region" description="Acidic residues" evidence="4">
    <location>
        <begin position="321"/>
        <end position="333"/>
    </location>
</feature>
<feature type="glycosylation site" description="N-linked (GlcNAc...) asparagine" evidence="1">
    <location>
        <position position="72"/>
    </location>
</feature>
<feature type="glycosylation site" description="N-linked (GlcNAc...) asparagine" evidence="1">
    <location>
        <position position="124"/>
    </location>
</feature>
<feature type="glycosylation site" description="N-linked (GlcNAc...) asparagine" evidence="1">
    <location>
        <position position="288"/>
    </location>
</feature>
<feature type="disulfide bond" evidence="2">
    <location>
        <begin position="32"/>
        <end position="55"/>
    </location>
</feature>
<feature type="disulfide bond" evidence="2">
    <location>
        <begin position="42"/>
        <end position="88"/>
    </location>
</feature>
<feature type="disulfide bond" evidence="2">
    <location>
        <begin position="56"/>
        <end position="91"/>
    </location>
</feature>
<feature type="disulfide bond" evidence="3">
    <location>
        <begin position="95"/>
        <end position="106"/>
    </location>
</feature>
<feature type="disulfide bond" evidence="3">
    <location>
        <begin position="100"/>
        <end position="116"/>
    </location>
</feature>
<feature type="disulfide bond" evidence="3">
    <location>
        <begin position="118"/>
        <end position="150"/>
    </location>
</feature>
<feature type="disulfide bond" evidence="3">
    <location>
        <begin position="122"/>
        <end position="143"/>
    </location>
</feature>
<feature type="disulfide bond" evidence="3">
    <location>
        <begin position="132"/>
        <end position="164"/>
    </location>
</feature>
<feature type="disulfide bond" evidence="3">
    <location>
        <begin position="192"/>
        <end position="225"/>
    </location>
</feature>
<feature type="disulfide bond" evidence="3">
    <location>
        <begin position="196"/>
        <end position="218"/>
    </location>
</feature>
<feature type="disulfide bond" evidence="3">
    <location>
        <begin position="207"/>
        <end position="239"/>
    </location>
</feature>
<feature type="disulfide bond" evidence="3">
    <location>
        <begin position="270"/>
        <end position="302"/>
    </location>
</feature>
<feature type="disulfide bond" evidence="3">
    <location>
        <begin position="274"/>
        <end position="295"/>
    </location>
</feature>
<feature type="disulfide bond" evidence="3">
    <location>
        <begin position="284"/>
        <end position="316"/>
    </location>
</feature>
<feature type="splice variant" id="VSP_001568" description="In isoform Short." evidence="6">
    <original>SIVEDTEEEEEEEEPDYSFVISSW</original>
    <variation>CK</variation>
    <location>
        <begin position="318"/>
        <end position="341"/>
    </location>
</feature>
<feature type="sequence conflict" description="In Ref. 3; no nucleotide entry." evidence="7" ref="3">
    <original>A</original>
    <variation>G</variation>
    <location>
        <position position="268"/>
    </location>
</feature>
<feature type="sequence conflict" description="In Ref. 3; no nucleotide entry." evidence="7" ref="3">
    <original>C</original>
    <variation>S</variation>
    <location>
        <position position="270"/>
    </location>
</feature>
<accession>P31515</accession>
<accession>Q5D032</accession>
<accession>Q91376</accession>
<name>FST_XENLA</name>
<evidence type="ECO:0000255" key="1"/>
<evidence type="ECO:0000255" key="2">
    <source>
        <dbReference type="PROSITE-ProRule" id="PRU00697"/>
    </source>
</evidence>
<evidence type="ECO:0000255" key="3">
    <source>
        <dbReference type="PROSITE-ProRule" id="PRU00798"/>
    </source>
</evidence>
<evidence type="ECO:0000256" key="4">
    <source>
        <dbReference type="SAM" id="MobiDB-lite"/>
    </source>
</evidence>
<evidence type="ECO:0000269" key="5">
    <source>
    </source>
</evidence>
<evidence type="ECO:0000303" key="6">
    <source>
    </source>
</evidence>
<evidence type="ECO:0000305" key="7"/>
<reference key="1">
    <citation type="journal article" date="1994" name="Cell">
        <title>Follistatin, an antagonist of activin, is expressed in the Spemann organizer and displays direct neuralizing activity.</title>
        <authorList>
            <person name="Hemmati-Brivanlou A."/>
            <person name="Kelly O.G."/>
            <person name="Melton D.A."/>
        </authorList>
    </citation>
    <scope>NUCLEOTIDE SEQUENCE [MRNA] (ISOFORM SHORT)</scope>
    <scope>CHARACTERIZATION</scope>
    <source>
        <tissue>Tail bud</tissue>
    </source>
</reference>
<reference key="2">
    <citation type="submission" date="2004-04" db="EMBL/GenBank/DDBJ databases">
        <authorList>
            <consortium name="NIH - Xenopus Gene Collection (XGC) project"/>
        </authorList>
    </citation>
    <scope>NUCLEOTIDE SEQUENCE [LARGE SCALE MRNA] (ISOFORM LONG)</scope>
    <source>
        <tissue>Embryo</tissue>
    </source>
</reference>
<reference key="3">
    <citation type="journal article" date="1991" name="Biochem. Biophys. Res. Commun.">
        <title>Expression of mRNA for activin-binding protein (follistatin) during early embryonic development of Xenopus laevis.</title>
        <authorList>
            <person name="Tashiro K."/>
            <person name="Yamada R."/>
            <person name="Asano M."/>
            <person name="Hashimoto M."/>
            <person name="Muramatsu M."/>
            <person name="Shiokawa K."/>
        </authorList>
    </citation>
    <scope>PARTIAL NUCLEOTIDE SEQUENCE (ISOFORM LONG)</scope>
    <source>
        <tissue>Ovary</tissue>
    </source>
</reference>
<reference key="4">
    <citation type="journal article" date="1993" name="Dev. Biol.">
        <title>Isolation and characterization of Xenopus follistatin and activins.</title>
        <authorList>
            <person name="Fukui A."/>
            <person name="Nakamura T."/>
            <person name="Sugino K."/>
            <person name="Takio K."/>
            <person name="Uchiyama H."/>
            <person name="Asashima M."/>
            <person name="Sugino H."/>
        </authorList>
    </citation>
    <scope>PROTEIN SEQUENCE OF N-TERMINUS</scope>
    <scope>CHARACTERIZATION</scope>
</reference>
<gene>
    <name type="primary">fst</name>
</gene>
<protein>
    <recommendedName>
        <fullName>Follistatin</fullName>
        <shortName>FS</shortName>
    </recommendedName>
    <alternativeName>
        <fullName>Activin-binding protein</fullName>
    </alternativeName>
    <alternativeName>
        <fullName>XFS-319</fullName>
    </alternativeName>
</protein>
<sequence length="341" mass="37543">MLNERIQPGMIFLLTVSLCHFMEYRAVQAGNCWLQQSKNGRCQVLYRTELSKEECCKTGRLGTSWTEEDVPNSTLFKWMIFHGGAPHCIPCKETCENVDCGPGKKCKMNKKNKPRCVCAPDCSNITWKGSVCGIDGKTYKDECALLKAKCKGVPELDVQYQGKCKKTCRDVLCPGSSSCVVDQTNNAYCVTCNRICPEPTSPDQYLCGNDGITYGSACHLRKATCLLGRSIGLAYEGKCIKAKSCEDIQCSAGKKCLWDSRVGRGRCALCDDLCGESKSDDTVCASDNTTYPSECAMKQAACSTGILLEVKHSGSCNSIVEDTEEEEEEEEPDYSFVISSW</sequence>
<comment type="function">
    <text>Binds directly to activin and functions as an activin antagonist which plays a role in neural induction. The short isoform is a more potent inhibitor of activin than the long isoform. Specific inhibitor of the biosynthesis and secretion of pituitary follicle stimulating hormone (FSH).</text>
</comment>
<comment type="subunit">
    <text evidence="7">Monomer.</text>
</comment>
<comment type="subcellular location">
    <subcellularLocation>
        <location>Secreted</location>
    </subcellularLocation>
</comment>
<comment type="alternative products">
    <event type="alternative splicing"/>
    <isoform>
        <id>P31515-1</id>
        <name>Long</name>
        <sequence type="displayed"/>
    </isoform>
    <isoform>
        <id>P31515-2</id>
        <name>Short</name>
        <sequence type="described" ref="VSP_001568"/>
    </isoform>
</comment>
<comment type="tissue specificity">
    <text>Spemann organizer and notochord.</text>
</comment>
<comment type="developmental stage">
    <text>The short isoform is present maternally while the long isoform is expressed at gastrula stages. Detected in a few cells of the Spemann organizer at the onset of gastrulation. During gastrulation expression continues in the prechordal plate and the anterior portion of the notochord anlage. Beginning at early neurula stages, expression is initiated at new sites in the head mesoderm; hypochord; pronephros; eyes; fore-, mid-, and hindbrain; and the midbrain-hindbrain junction.</text>
</comment>
<comment type="induction">
    <text>By activin.</text>
</comment>
<dbReference type="EMBL" id="S69801">
    <property type="protein sequence ID" value="AAB30638.1"/>
    <property type="molecule type" value="mRNA"/>
</dbReference>
<dbReference type="EMBL" id="BC068649">
    <property type="protein sequence ID" value="AAH68649.1"/>
    <property type="molecule type" value="mRNA"/>
</dbReference>
<dbReference type="PIR" id="A53502">
    <property type="entry name" value="A53502"/>
</dbReference>
<dbReference type="RefSeq" id="NP_001084059.1">
    <molecule id="P31515-1"/>
    <property type="nucleotide sequence ID" value="NM_001090590.1"/>
</dbReference>
<dbReference type="SMR" id="P31515"/>
<dbReference type="MEROPS" id="I01.966"/>
<dbReference type="GlyCosmos" id="P31515">
    <property type="glycosylation" value="3 sites, No reported glycans"/>
</dbReference>
<dbReference type="DNASU" id="399282"/>
<dbReference type="GeneID" id="399282"/>
<dbReference type="KEGG" id="xla:399282"/>
<dbReference type="AGR" id="Xenbase:XB-GENE-486300"/>
<dbReference type="CTD" id="399282"/>
<dbReference type="Xenbase" id="XB-GENE-486300">
    <property type="gene designation" value="fst.L"/>
</dbReference>
<dbReference type="OMA" id="DYKAYVH"/>
<dbReference type="OrthoDB" id="6614329at2759"/>
<dbReference type="Proteomes" id="UP000186698">
    <property type="component" value="Chromosome 1L"/>
</dbReference>
<dbReference type="Bgee" id="399282">
    <property type="expression patterns" value="Expressed in heart and 15 other cell types or tissues"/>
</dbReference>
<dbReference type="GO" id="GO:0005576">
    <property type="term" value="C:extracellular region"/>
    <property type="evidence" value="ECO:0000318"/>
    <property type="project" value="GO_Central"/>
</dbReference>
<dbReference type="GO" id="GO:0005615">
    <property type="term" value="C:extracellular space"/>
    <property type="evidence" value="ECO:0000318"/>
    <property type="project" value="GO_Central"/>
</dbReference>
<dbReference type="GO" id="GO:0048185">
    <property type="term" value="F:activin binding"/>
    <property type="evidence" value="ECO:0000318"/>
    <property type="project" value="GO_Central"/>
</dbReference>
<dbReference type="GO" id="GO:0005509">
    <property type="term" value="F:calcium ion binding"/>
    <property type="evidence" value="ECO:0007669"/>
    <property type="project" value="TreeGrafter"/>
</dbReference>
<dbReference type="GO" id="GO:0005518">
    <property type="term" value="F:collagen binding"/>
    <property type="evidence" value="ECO:0007669"/>
    <property type="project" value="TreeGrafter"/>
</dbReference>
<dbReference type="GO" id="GO:0050840">
    <property type="term" value="F:extracellular matrix binding"/>
    <property type="evidence" value="ECO:0007669"/>
    <property type="project" value="TreeGrafter"/>
</dbReference>
<dbReference type="GO" id="GO:0030154">
    <property type="term" value="P:cell differentiation"/>
    <property type="evidence" value="ECO:0000318"/>
    <property type="project" value="GO_Central"/>
</dbReference>
<dbReference type="GO" id="GO:0032926">
    <property type="term" value="P:negative regulation of activin receptor signaling pathway"/>
    <property type="evidence" value="ECO:0000318"/>
    <property type="project" value="GO_Central"/>
</dbReference>
<dbReference type="GO" id="GO:0030510">
    <property type="term" value="P:regulation of BMP signaling pathway"/>
    <property type="evidence" value="ECO:0000318"/>
    <property type="project" value="GO_Central"/>
</dbReference>
<dbReference type="CDD" id="cd00104">
    <property type="entry name" value="KAZAL_FS"/>
    <property type="match status" value="3"/>
</dbReference>
<dbReference type="FunFam" id="3.30.60.30:FF:000006">
    <property type="entry name" value="Follistatin a"/>
    <property type="match status" value="1"/>
</dbReference>
<dbReference type="FunFam" id="3.30.60.30:FF:000009">
    <property type="entry name" value="Follistatin a"/>
    <property type="match status" value="1"/>
</dbReference>
<dbReference type="FunFam" id="3.90.290.10:FF:000013">
    <property type="entry name" value="Follistatin a"/>
    <property type="match status" value="1"/>
</dbReference>
<dbReference type="Gene3D" id="3.30.60.30">
    <property type="match status" value="3"/>
</dbReference>
<dbReference type="Gene3D" id="3.90.290.10">
    <property type="entry name" value="TGF-beta binding (TB) domain"/>
    <property type="match status" value="1"/>
</dbReference>
<dbReference type="InterPro" id="IPR003645">
    <property type="entry name" value="Fol_N"/>
</dbReference>
<dbReference type="InterPro" id="IPR015369">
    <property type="entry name" value="Follistatin/Osteonectin_EGF"/>
</dbReference>
<dbReference type="InterPro" id="IPR002350">
    <property type="entry name" value="Kazal_dom"/>
</dbReference>
<dbReference type="InterPro" id="IPR036058">
    <property type="entry name" value="Kazal_dom_sf"/>
</dbReference>
<dbReference type="InterPro" id="IPR017878">
    <property type="entry name" value="TB_dom"/>
</dbReference>
<dbReference type="InterPro" id="IPR036773">
    <property type="entry name" value="TB_dom_sf"/>
</dbReference>
<dbReference type="PANTHER" id="PTHR13866:SF29">
    <property type="entry name" value="FOLLISTATIN"/>
    <property type="match status" value="1"/>
</dbReference>
<dbReference type="PANTHER" id="PTHR13866">
    <property type="entry name" value="SPARC OSTEONECTIN"/>
    <property type="match status" value="1"/>
</dbReference>
<dbReference type="Pfam" id="PF09289">
    <property type="entry name" value="FOLN"/>
    <property type="match status" value="1"/>
</dbReference>
<dbReference type="Pfam" id="PF21333">
    <property type="entry name" value="FST_N"/>
    <property type="match status" value="1"/>
</dbReference>
<dbReference type="Pfam" id="PF07648">
    <property type="entry name" value="Kazal_2"/>
    <property type="match status" value="3"/>
</dbReference>
<dbReference type="SMART" id="SM00274">
    <property type="entry name" value="FOLN"/>
    <property type="match status" value="3"/>
</dbReference>
<dbReference type="SMART" id="SM00280">
    <property type="entry name" value="KAZAL"/>
    <property type="match status" value="3"/>
</dbReference>
<dbReference type="SUPFAM" id="SSF57196">
    <property type="entry name" value="EGF/Laminin"/>
    <property type="match status" value="1"/>
</dbReference>
<dbReference type="SUPFAM" id="SSF100895">
    <property type="entry name" value="Kazal-type serine protease inhibitors"/>
    <property type="match status" value="3"/>
</dbReference>
<dbReference type="SUPFAM" id="SSF57581">
    <property type="entry name" value="TB module/8-cys domain"/>
    <property type="match status" value="1"/>
</dbReference>
<dbReference type="PROSITE" id="PS51465">
    <property type="entry name" value="KAZAL_2"/>
    <property type="match status" value="3"/>
</dbReference>
<dbReference type="PROSITE" id="PS51364">
    <property type="entry name" value="TB"/>
    <property type="match status" value="1"/>
</dbReference>